<gene>
    <name evidence="1" type="primary">rsmA</name>
    <name evidence="1" type="synonym">ksgA</name>
    <name type="ordered locus">Dhaf_0074</name>
</gene>
<sequence length="278" mass="30418">MENAANYTRRILKGGAKAHKSLGQNFLMDDRVIEAIAAASIKDPEIPVVEIGPGLGVLTRVLAQKAQKVWAVELDRGKVNLLQRELQGLPVDILNMDALKLDLKDIWGTGKGVLVGNLPYYITSPLLMHFLEQKDSLASMVVMVQKEVADRLVAKPGGKDYGILSIAAQVSAQGEKLFEVPPQAFWPAPKVTSAVVRFELRSYPGFRVKEKDFFRVVKAAFSQRRKTLGNSLAGGLGLPKQQIGEILAAAGVDEQRRAETLSIDEFQAVTEAVMKNLD</sequence>
<protein>
    <recommendedName>
        <fullName evidence="1">Ribosomal RNA small subunit methyltransferase A</fullName>
        <ecNumber evidence="1">2.1.1.182</ecNumber>
    </recommendedName>
    <alternativeName>
        <fullName evidence="1">16S rRNA (adenine(1518)-N(6)/adenine(1519)-N(6))-dimethyltransferase</fullName>
    </alternativeName>
    <alternativeName>
        <fullName evidence="1">16S rRNA dimethyladenosine transferase</fullName>
    </alternativeName>
    <alternativeName>
        <fullName evidence="1">16S rRNA dimethylase</fullName>
    </alternativeName>
    <alternativeName>
        <fullName evidence="1">S-adenosylmethionine-6-N', N'-adenosyl(rRNA) dimethyltransferase</fullName>
    </alternativeName>
</protein>
<accession>B8FY38</accession>
<proteinExistence type="inferred from homology"/>
<evidence type="ECO:0000255" key="1">
    <source>
        <dbReference type="HAMAP-Rule" id="MF_00607"/>
    </source>
</evidence>
<name>RSMA_DESHD</name>
<reference key="1">
    <citation type="journal article" date="2012" name="BMC Microbiol.">
        <title>Genome sequence of Desulfitobacterium hafniense DCB-2, a Gram-positive anaerobe capable of dehalogenation and metal reduction.</title>
        <authorList>
            <person name="Kim S.H."/>
            <person name="Harzman C."/>
            <person name="Davis J.K."/>
            <person name="Hutcheson R."/>
            <person name="Broderick J.B."/>
            <person name="Marsh T.L."/>
            <person name="Tiedje J.M."/>
        </authorList>
    </citation>
    <scope>NUCLEOTIDE SEQUENCE [LARGE SCALE GENOMIC DNA]</scope>
    <source>
        <strain>DSM 10664 / DCB-2</strain>
    </source>
</reference>
<organism>
    <name type="scientific">Desulfitobacterium hafniense (strain DSM 10664 / DCB-2)</name>
    <dbReference type="NCBI Taxonomy" id="272564"/>
    <lineage>
        <taxon>Bacteria</taxon>
        <taxon>Bacillati</taxon>
        <taxon>Bacillota</taxon>
        <taxon>Clostridia</taxon>
        <taxon>Eubacteriales</taxon>
        <taxon>Desulfitobacteriaceae</taxon>
        <taxon>Desulfitobacterium</taxon>
    </lineage>
</organism>
<dbReference type="EC" id="2.1.1.182" evidence="1"/>
<dbReference type="EMBL" id="CP001336">
    <property type="protein sequence ID" value="ACL18143.1"/>
    <property type="molecule type" value="Genomic_DNA"/>
</dbReference>
<dbReference type="RefSeq" id="WP_005814989.1">
    <property type="nucleotide sequence ID" value="NC_011830.1"/>
</dbReference>
<dbReference type="SMR" id="B8FY38"/>
<dbReference type="KEGG" id="dhd:Dhaf_0074"/>
<dbReference type="HOGENOM" id="CLU_041220_0_1_9"/>
<dbReference type="Proteomes" id="UP000007726">
    <property type="component" value="Chromosome"/>
</dbReference>
<dbReference type="GO" id="GO:0005829">
    <property type="term" value="C:cytosol"/>
    <property type="evidence" value="ECO:0007669"/>
    <property type="project" value="TreeGrafter"/>
</dbReference>
<dbReference type="GO" id="GO:0052908">
    <property type="term" value="F:16S rRNA (adenine(1518)-N(6)/adenine(1519)-N(6))-dimethyltransferase activity"/>
    <property type="evidence" value="ECO:0007669"/>
    <property type="project" value="UniProtKB-EC"/>
</dbReference>
<dbReference type="GO" id="GO:0003723">
    <property type="term" value="F:RNA binding"/>
    <property type="evidence" value="ECO:0007669"/>
    <property type="project" value="UniProtKB-KW"/>
</dbReference>
<dbReference type="CDD" id="cd02440">
    <property type="entry name" value="AdoMet_MTases"/>
    <property type="match status" value="1"/>
</dbReference>
<dbReference type="Gene3D" id="1.10.8.100">
    <property type="entry name" value="Ribosomal RNA adenine dimethylase-like, domain 2"/>
    <property type="match status" value="1"/>
</dbReference>
<dbReference type="Gene3D" id="3.40.50.150">
    <property type="entry name" value="Vaccinia Virus protein VP39"/>
    <property type="match status" value="1"/>
</dbReference>
<dbReference type="HAMAP" id="MF_00607">
    <property type="entry name" value="16SrRNA_methyltr_A"/>
    <property type="match status" value="1"/>
</dbReference>
<dbReference type="InterPro" id="IPR001737">
    <property type="entry name" value="KsgA/Erm"/>
</dbReference>
<dbReference type="InterPro" id="IPR023165">
    <property type="entry name" value="rRNA_Ade_diMease-like_C"/>
</dbReference>
<dbReference type="InterPro" id="IPR020596">
    <property type="entry name" value="rRNA_Ade_Mease_Trfase_CS"/>
</dbReference>
<dbReference type="InterPro" id="IPR020598">
    <property type="entry name" value="rRNA_Ade_methylase_Trfase_N"/>
</dbReference>
<dbReference type="InterPro" id="IPR011530">
    <property type="entry name" value="rRNA_adenine_dimethylase"/>
</dbReference>
<dbReference type="InterPro" id="IPR029063">
    <property type="entry name" value="SAM-dependent_MTases_sf"/>
</dbReference>
<dbReference type="NCBIfam" id="TIGR00755">
    <property type="entry name" value="ksgA"/>
    <property type="match status" value="1"/>
</dbReference>
<dbReference type="PANTHER" id="PTHR11727">
    <property type="entry name" value="DIMETHYLADENOSINE TRANSFERASE"/>
    <property type="match status" value="1"/>
</dbReference>
<dbReference type="PANTHER" id="PTHR11727:SF7">
    <property type="entry name" value="DIMETHYLADENOSINE TRANSFERASE-RELATED"/>
    <property type="match status" value="1"/>
</dbReference>
<dbReference type="Pfam" id="PF00398">
    <property type="entry name" value="RrnaAD"/>
    <property type="match status" value="1"/>
</dbReference>
<dbReference type="SMART" id="SM00650">
    <property type="entry name" value="rADc"/>
    <property type="match status" value="1"/>
</dbReference>
<dbReference type="SUPFAM" id="SSF53335">
    <property type="entry name" value="S-adenosyl-L-methionine-dependent methyltransferases"/>
    <property type="match status" value="1"/>
</dbReference>
<dbReference type="PROSITE" id="PS01131">
    <property type="entry name" value="RRNA_A_DIMETH"/>
    <property type="match status" value="1"/>
</dbReference>
<dbReference type="PROSITE" id="PS51689">
    <property type="entry name" value="SAM_RNA_A_N6_MT"/>
    <property type="match status" value="1"/>
</dbReference>
<feature type="chain" id="PRO_1000194379" description="Ribosomal RNA small subunit methyltransferase A">
    <location>
        <begin position="1"/>
        <end position="278"/>
    </location>
</feature>
<feature type="binding site" evidence="1">
    <location>
        <position position="25"/>
    </location>
    <ligand>
        <name>S-adenosyl-L-methionine</name>
        <dbReference type="ChEBI" id="CHEBI:59789"/>
    </ligand>
</feature>
<feature type="binding site" evidence="1">
    <location>
        <position position="27"/>
    </location>
    <ligand>
        <name>S-adenosyl-L-methionine</name>
        <dbReference type="ChEBI" id="CHEBI:59789"/>
    </ligand>
</feature>
<feature type="binding site" evidence="1">
    <location>
        <position position="52"/>
    </location>
    <ligand>
        <name>S-adenosyl-L-methionine</name>
        <dbReference type="ChEBI" id="CHEBI:59789"/>
    </ligand>
</feature>
<feature type="binding site" evidence="1">
    <location>
        <position position="73"/>
    </location>
    <ligand>
        <name>S-adenosyl-L-methionine</name>
        <dbReference type="ChEBI" id="CHEBI:59789"/>
    </ligand>
</feature>
<feature type="binding site" evidence="1">
    <location>
        <position position="97"/>
    </location>
    <ligand>
        <name>S-adenosyl-L-methionine</name>
        <dbReference type="ChEBI" id="CHEBI:59789"/>
    </ligand>
</feature>
<feature type="binding site" evidence="1">
    <location>
        <position position="117"/>
    </location>
    <ligand>
        <name>S-adenosyl-L-methionine</name>
        <dbReference type="ChEBI" id="CHEBI:59789"/>
    </ligand>
</feature>
<comment type="function">
    <text evidence="1">Specifically dimethylates two adjacent adenosines (A1518 and A1519) in the loop of a conserved hairpin near the 3'-end of 16S rRNA in the 30S particle. May play a critical role in biogenesis of 30S subunits.</text>
</comment>
<comment type="catalytic activity">
    <reaction evidence="1">
        <text>adenosine(1518)/adenosine(1519) in 16S rRNA + 4 S-adenosyl-L-methionine = N(6)-dimethyladenosine(1518)/N(6)-dimethyladenosine(1519) in 16S rRNA + 4 S-adenosyl-L-homocysteine + 4 H(+)</text>
        <dbReference type="Rhea" id="RHEA:19609"/>
        <dbReference type="Rhea" id="RHEA-COMP:10232"/>
        <dbReference type="Rhea" id="RHEA-COMP:10233"/>
        <dbReference type="ChEBI" id="CHEBI:15378"/>
        <dbReference type="ChEBI" id="CHEBI:57856"/>
        <dbReference type="ChEBI" id="CHEBI:59789"/>
        <dbReference type="ChEBI" id="CHEBI:74411"/>
        <dbReference type="ChEBI" id="CHEBI:74493"/>
        <dbReference type="EC" id="2.1.1.182"/>
    </reaction>
</comment>
<comment type="subcellular location">
    <subcellularLocation>
        <location evidence="1">Cytoplasm</location>
    </subcellularLocation>
</comment>
<comment type="similarity">
    <text evidence="1">Belongs to the class I-like SAM-binding methyltransferase superfamily. rRNA adenine N(6)-methyltransferase family. RsmA subfamily.</text>
</comment>
<keyword id="KW-0963">Cytoplasm</keyword>
<keyword id="KW-0489">Methyltransferase</keyword>
<keyword id="KW-0694">RNA-binding</keyword>
<keyword id="KW-0698">rRNA processing</keyword>
<keyword id="KW-0949">S-adenosyl-L-methionine</keyword>
<keyword id="KW-0808">Transferase</keyword>